<evidence type="ECO:0000250" key="1">
    <source>
        <dbReference type="UniProtKB" id="P38051"/>
    </source>
</evidence>
<evidence type="ECO:0000305" key="2"/>
<reference key="1">
    <citation type="journal article" date="1998" name="Nature">
        <title>Deciphering the biology of Mycobacterium tuberculosis from the complete genome sequence.</title>
        <authorList>
            <person name="Cole S.T."/>
            <person name="Brosch R."/>
            <person name="Parkhill J."/>
            <person name="Garnier T."/>
            <person name="Churcher C.M."/>
            <person name="Harris D.E."/>
            <person name="Gordon S.V."/>
            <person name="Eiglmeier K."/>
            <person name="Gas S."/>
            <person name="Barry C.E. III"/>
            <person name="Tekaia F."/>
            <person name="Badcock K."/>
            <person name="Basham D."/>
            <person name="Brown D."/>
            <person name="Chillingworth T."/>
            <person name="Connor R."/>
            <person name="Davies R.M."/>
            <person name="Devlin K."/>
            <person name="Feltwell T."/>
            <person name="Gentles S."/>
            <person name="Hamlin N."/>
            <person name="Holroyd S."/>
            <person name="Hornsby T."/>
            <person name="Jagels K."/>
            <person name="Krogh A."/>
            <person name="McLean J."/>
            <person name="Moule S."/>
            <person name="Murphy L.D."/>
            <person name="Oliver S."/>
            <person name="Osborne J."/>
            <person name="Quail M.A."/>
            <person name="Rajandream M.A."/>
            <person name="Rogers J."/>
            <person name="Rutter S."/>
            <person name="Seeger K."/>
            <person name="Skelton S."/>
            <person name="Squares S."/>
            <person name="Squares R."/>
            <person name="Sulston J.E."/>
            <person name="Taylor K."/>
            <person name="Whitehead S."/>
            <person name="Barrell B.G."/>
        </authorList>
    </citation>
    <scope>NUCLEOTIDE SEQUENCE [LARGE SCALE GENOMIC DNA]</scope>
    <source>
        <strain>ATCC 25618 / H37Rv</strain>
    </source>
</reference>
<reference key="2">
    <citation type="journal article" date="2011" name="Mol. Cell. Proteomics">
        <title>Proteogenomic analysis of Mycobacterium tuberculosis by high resolution mass spectrometry.</title>
        <authorList>
            <person name="Kelkar D.S."/>
            <person name="Kumar D."/>
            <person name="Kumar P."/>
            <person name="Balakrishnan L."/>
            <person name="Muthusamy B."/>
            <person name="Yadav A.K."/>
            <person name="Shrivastava P."/>
            <person name="Marimuthu A."/>
            <person name="Anand S."/>
            <person name="Sundaram H."/>
            <person name="Kingsbury R."/>
            <person name="Harsha H.C."/>
            <person name="Nair B."/>
            <person name="Prasad T.S."/>
            <person name="Chauhan D.S."/>
            <person name="Katoch K."/>
            <person name="Katoch V.M."/>
            <person name="Kumar P."/>
            <person name="Chaerkady R."/>
            <person name="Ramachandran S."/>
            <person name="Dash D."/>
            <person name="Pandey A."/>
        </authorList>
    </citation>
    <scope>IDENTIFICATION BY MASS SPECTROMETRY [LARGE SCALE ANALYSIS]</scope>
    <source>
        <strain>ATCC 25618 / H37Rv</strain>
    </source>
</reference>
<protein>
    <recommendedName>
        <fullName>Putative isochorismate synthase MenF</fullName>
        <ecNumber evidence="1">5.4.4.2</ecNumber>
    </recommendedName>
    <alternativeName>
        <fullName>Isochorismate mutase</fullName>
    </alternativeName>
</protein>
<feature type="chain" id="PRO_0000399472" description="Putative isochorismate synthase MenF">
    <location>
        <begin position="1"/>
        <end position="372"/>
    </location>
</feature>
<feature type="active site" description="Proton acceptor" evidence="1">
    <location>
        <position position="119"/>
    </location>
</feature>
<feature type="active site" description="Proton donor" evidence="1">
    <location>
        <position position="175"/>
    </location>
</feature>
<feature type="binding site" evidence="1">
    <location>
        <position position="219"/>
    </location>
    <ligand>
        <name>Mg(2+)</name>
        <dbReference type="ChEBI" id="CHEBI:18420"/>
    </ligand>
</feature>
<feature type="binding site" evidence="1">
    <location>
        <position position="356"/>
    </location>
    <ligand>
        <name>Mg(2+)</name>
        <dbReference type="ChEBI" id="CHEBI:18420"/>
    </ligand>
</feature>
<gene>
    <name type="primary">menF</name>
    <name type="synonym">entC</name>
    <name type="ordered locus">Rv3215</name>
</gene>
<keyword id="KW-0413">Isomerase</keyword>
<keyword id="KW-0460">Magnesium</keyword>
<keyword id="KW-0474">Menaquinone biosynthesis</keyword>
<keyword id="KW-0479">Metal-binding</keyword>
<keyword id="KW-1185">Reference proteome</keyword>
<sequence>MSAHVATLHPEPPFALCGPRGTLIARGVRTRYCDVRAAQAALRSGTAPILLGALPFDVSRPAALMVPDGVLRARKLPDWPTGPLPKVRVAAALPPPADYLTRIGRARDLLAAFDGPLHKVVLARAVQLTADAPLDARVLLRRLVVADPTAYGYLVDLTSAGNDDTGAALVGASPELLVARSGNRVMCKPFAGSAPRAADPKLDAANAAALASSAKNRHEHQLVVDTMRVALEPLCEDLTIPAQPQLNRTAAVWHLCTAITGRLRNISTTAIDLALALHPTPAVGGVPTKAATELIAELEGDRGFYAGAVGWCDGRGDGHWVVSIRCAQLSADRRAALAHAGGGIVAESDPDDELEETTTKFATILTALGVEQ</sequence>
<name>MENF_MYCTU</name>
<comment type="function">
    <text evidence="1">Catalyzes the conversion of chorismate to isochorismate.</text>
</comment>
<comment type="catalytic activity">
    <reaction evidence="1">
        <text>chorismate = isochorismate</text>
        <dbReference type="Rhea" id="RHEA:18985"/>
        <dbReference type="ChEBI" id="CHEBI:29748"/>
        <dbReference type="ChEBI" id="CHEBI:29780"/>
        <dbReference type="EC" id="5.4.4.2"/>
    </reaction>
</comment>
<comment type="cofactor">
    <cofactor evidence="1">
        <name>Mg(2+)</name>
        <dbReference type="ChEBI" id="CHEBI:18420"/>
    </cofactor>
</comment>
<comment type="pathway">
    <text evidence="1">Quinol/quinone metabolism; 1,4-dihydroxy-2-naphthoate biosynthesis; 1,4-dihydroxy-2-naphthoate from chorismate: step 1/7.</text>
</comment>
<comment type="pathway">
    <text evidence="1">Quinol/quinone metabolism; menaquinone biosynthesis.</text>
</comment>
<comment type="similarity">
    <text evidence="2">Belongs to the isochorismate synthase family.</text>
</comment>
<accession>P9WFW9</accession>
<accession>L0TDH4</accession>
<accession>O05851</accession>
<accession>Q7D5X1</accession>
<dbReference type="EC" id="5.4.4.2" evidence="1"/>
<dbReference type="EMBL" id="AL123456">
    <property type="protein sequence ID" value="CCP46031.1"/>
    <property type="molecule type" value="Genomic_DNA"/>
</dbReference>
<dbReference type="PIR" id="H70595">
    <property type="entry name" value="H70595"/>
</dbReference>
<dbReference type="RefSeq" id="NP_217731.1">
    <property type="nucleotide sequence ID" value="NC_000962.3"/>
</dbReference>
<dbReference type="RefSeq" id="WP_003416879.1">
    <property type="nucleotide sequence ID" value="NZ_NVQJ01000003.1"/>
</dbReference>
<dbReference type="SMR" id="P9WFW9"/>
<dbReference type="FunCoup" id="P9WFW9">
    <property type="interactions" value="17"/>
</dbReference>
<dbReference type="STRING" id="83332.Rv3215"/>
<dbReference type="PaxDb" id="83332-Rv3215"/>
<dbReference type="DNASU" id="888824"/>
<dbReference type="GeneID" id="888824"/>
<dbReference type="KEGG" id="mtu:Rv3215"/>
<dbReference type="KEGG" id="mtv:RVBD_3215"/>
<dbReference type="TubercuList" id="Rv3215"/>
<dbReference type="eggNOG" id="COG1169">
    <property type="taxonomic scope" value="Bacteria"/>
</dbReference>
<dbReference type="InParanoid" id="P9WFW9"/>
<dbReference type="OrthoDB" id="9806579at2"/>
<dbReference type="PhylomeDB" id="P9WFW9"/>
<dbReference type="UniPathway" id="UPA00079"/>
<dbReference type="UniPathway" id="UPA01057">
    <property type="reaction ID" value="UER00163"/>
</dbReference>
<dbReference type="Proteomes" id="UP000001584">
    <property type="component" value="Chromosome"/>
</dbReference>
<dbReference type="GO" id="GO:0008909">
    <property type="term" value="F:isochorismate synthase activity"/>
    <property type="evidence" value="ECO:0007669"/>
    <property type="project" value="UniProtKB-EC"/>
</dbReference>
<dbReference type="GO" id="GO:0046872">
    <property type="term" value="F:metal ion binding"/>
    <property type="evidence" value="ECO:0007669"/>
    <property type="project" value="UniProtKB-KW"/>
</dbReference>
<dbReference type="GO" id="GO:0009234">
    <property type="term" value="P:menaquinone biosynthetic process"/>
    <property type="evidence" value="ECO:0007669"/>
    <property type="project" value="UniProtKB-UniPathway"/>
</dbReference>
<dbReference type="Gene3D" id="3.60.120.10">
    <property type="entry name" value="Anthranilate synthase"/>
    <property type="match status" value="1"/>
</dbReference>
<dbReference type="InterPro" id="IPR005801">
    <property type="entry name" value="ADC_synthase"/>
</dbReference>
<dbReference type="InterPro" id="IPR015890">
    <property type="entry name" value="Chorismate_C"/>
</dbReference>
<dbReference type="InterPro" id="IPR004561">
    <property type="entry name" value="IsoChor_synthase"/>
</dbReference>
<dbReference type="NCBIfam" id="TIGR00543">
    <property type="entry name" value="isochor_syn"/>
    <property type="match status" value="1"/>
</dbReference>
<dbReference type="PANTHER" id="PTHR42839">
    <property type="entry name" value="ISOCHORISMATE SYNTHASE ENTC"/>
    <property type="match status" value="1"/>
</dbReference>
<dbReference type="PANTHER" id="PTHR42839:SF2">
    <property type="entry name" value="ISOCHORISMATE SYNTHASE ENTC"/>
    <property type="match status" value="1"/>
</dbReference>
<dbReference type="Pfam" id="PF00425">
    <property type="entry name" value="Chorismate_bind"/>
    <property type="match status" value="1"/>
</dbReference>
<dbReference type="SUPFAM" id="SSF56322">
    <property type="entry name" value="ADC synthase"/>
    <property type="match status" value="1"/>
</dbReference>
<proteinExistence type="evidence at protein level"/>
<organism>
    <name type="scientific">Mycobacterium tuberculosis (strain ATCC 25618 / H37Rv)</name>
    <dbReference type="NCBI Taxonomy" id="83332"/>
    <lineage>
        <taxon>Bacteria</taxon>
        <taxon>Bacillati</taxon>
        <taxon>Actinomycetota</taxon>
        <taxon>Actinomycetes</taxon>
        <taxon>Mycobacteriales</taxon>
        <taxon>Mycobacteriaceae</taxon>
        <taxon>Mycobacterium</taxon>
        <taxon>Mycobacterium tuberculosis complex</taxon>
    </lineage>
</organism>